<protein>
    <recommendedName>
        <fullName>Defensin-like protein 151</fullName>
    </recommendedName>
    <alternativeName>
        <fullName>Low-molecular-weight cysteine-rich protein 17</fullName>
        <shortName>Protein LCR17</shortName>
    </alternativeName>
</protein>
<feature type="signal peptide" evidence="2">
    <location>
        <begin position="1"/>
        <end position="29"/>
    </location>
</feature>
<feature type="chain" id="PRO_0000206204" description="Defensin-like protein 151">
    <location>
        <begin position="30"/>
        <end position="96"/>
    </location>
</feature>
<feature type="disulfide bond" evidence="1">
    <location>
        <begin position="35"/>
        <end position="88"/>
    </location>
</feature>
<feature type="disulfide bond" evidence="1">
    <location>
        <begin position="48"/>
        <end position="68"/>
    </location>
</feature>
<feature type="disulfide bond" evidence="1">
    <location>
        <begin position="53"/>
        <end position="82"/>
    </location>
</feature>
<feature type="disulfide bond" evidence="1">
    <location>
        <begin position="57"/>
        <end position="84"/>
    </location>
</feature>
<organism>
    <name type="scientific">Arabidopsis thaliana</name>
    <name type="common">Mouse-ear cress</name>
    <dbReference type="NCBI Taxonomy" id="3702"/>
    <lineage>
        <taxon>Eukaryota</taxon>
        <taxon>Viridiplantae</taxon>
        <taxon>Streptophyta</taxon>
        <taxon>Embryophyta</taxon>
        <taxon>Tracheophyta</taxon>
        <taxon>Spermatophyta</taxon>
        <taxon>Magnoliopsida</taxon>
        <taxon>eudicotyledons</taxon>
        <taxon>Gunneridae</taxon>
        <taxon>Pentapetalae</taxon>
        <taxon>rosids</taxon>
        <taxon>malvids</taxon>
        <taxon>Brassicales</taxon>
        <taxon>Brassicaceae</taxon>
        <taxon>Camelineae</taxon>
        <taxon>Arabidopsis</taxon>
    </lineage>
</organism>
<gene>
    <name type="primary">LCR17</name>
    <name type="ordered locus">At4g11760</name>
    <name type="ORF">T5C23.190</name>
</gene>
<sequence>MKKPSQLSATILTIFVILAIGVMVKETLGQAPSTCFEALKDASKGASCDSELCASLCKKKSGGGVGTCRTKTTQPSKGQPECHCRFWCKSDGTPYK</sequence>
<evidence type="ECO:0000250" key="1"/>
<evidence type="ECO:0000255" key="2"/>
<evidence type="ECO:0000305" key="3"/>
<dbReference type="EMBL" id="AL049500">
    <property type="protein sequence ID" value="CAB39947.1"/>
    <property type="molecule type" value="Genomic_DNA"/>
</dbReference>
<dbReference type="EMBL" id="AL161532">
    <property type="protein sequence ID" value="CAB78219.1"/>
    <property type="molecule type" value="Genomic_DNA"/>
</dbReference>
<dbReference type="EMBL" id="CP002687">
    <property type="protein sequence ID" value="AEE83046.1"/>
    <property type="molecule type" value="Genomic_DNA"/>
</dbReference>
<dbReference type="EMBL" id="BT014935">
    <property type="protein sequence ID" value="AAT47786.1"/>
    <property type="molecule type" value="mRNA"/>
</dbReference>
<dbReference type="PIR" id="T04223">
    <property type="entry name" value="T04223"/>
</dbReference>
<dbReference type="RefSeq" id="NP_192913.1">
    <property type="nucleotide sequence ID" value="NM_117245.3"/>
</dbReference>
<dbReference type="SMR" id="Q9T0E3"/>
<dbReference type="STRING" id="3702.Q9T0E3"/>
<dbReference type="PaxDb" id="3702-AT4G11760.1"/>
<dbReference type="ProteomicsDB" id="224195"/>
<dbReference type="EnsemblPlants" id="AT4G11760.1">
    <property type="protein sequence ID" value="AT4G11760.1"/>
    <property type="gene ID" value="AT4G11760"/>
</dbReference>
<dbReference type="GeneID" id="826782"/>
<dbReference type="Gramene" id="AT4G11760.1">
    <property type="protein sequence ID" value="AT4G11760.1"/>
    <property type="gene ID" value="AT4G11760"/>
</dbReference>
<dbReference type="KEGG" id="ath:AT4G11760"/>
<dbReference type="Araport" id="AT4G11760"/>
<dbReference type="TAIR" id="AT4G11760">
    <property type="gene designation" value="LCR17"/>
</dbReference>
<dbReference type="HOGENOM" id="CLU_185543_0_0_1"/>
<dbReference type="InParanoid" id="Q9T0E3"/>
<dbReference type="OMA" id="CFAMSEC"/>
<dbReference type="PhylomeDB" id="Q9T0E3"/>
<dbReference type="PRO" id="PR:Q9T0E3"/>
<dbReference type="Proteomes" id="UP000006548">
    <property type="component" value="Chromosome 4"/>
</dbReference>
<dbReference type="ExpressionAtlas" id="Q9T0E3">
    <property type="expression patterns" value="baseline and differential"/>
</dbReference>
<dbReference type="GO" id="GO:0005576">
    <property type="term" value="C:extracellular region"/>
    <property type="evidence" value="ECO:0007669"/>
    <property type="project" value="UniProtKB-SubCell"/>
</dbReference>
<dbReference type="GO" id="GO:0050832">
    <property type="term" value="P:defense response to fungus"/>
    <property type="evidence" value="ECO:0007669"/>
    <property type="project" value="UniProtKB-KW"/>
</dbReference>
<dbReference type="GO" id="GO:0031640">
    <property type="term" value="P:killing of cells of another organism"/>
    <property type="evidence" value="ECO:0007669"/>
    <property type="project" value="UniProtKB-KW"/>
</dbReference>
<dbReference type="InterPro" id="IPR010851">
    <property type="entry name" value="DEFL"/>
</dbReference>
<dbReference type="InterPro" id="IPR003614">
    <property type="entry name" value="Scorpion_toxin-like"/>
</dbReference>
<dbReference type="PANTHER" id="PTHR34783">
    <property type="entry name" value="DEFENSIN-LIKE PROTEIN 144-RELATED"/>
    <property type="match status" value="1"/>
</dbReference>
<dbReference type="PANTHER" id="PTHR34783:SF1">
    <property type="entry name" value="DEFENSIN-LIKE PROTEIN 144-RELATED"/>
    <property type="match status" value="1"/>
</dbReference>
<dbReference type="Pfam" id="PF07333">
    <property type="entry name" value="SLR1-BP"/>
    <property type="match status" value="1"/>
</dbReference>
<dbReference type="SMART" id="SM00505">
    <property type="entry name" value="Knot1"/>
    <property type="match status" value="1"/>
</dbReference>
<reference key="1">
    <citation type="journal article" date="1999" name="Nature">
        <title>Sequence and analysis of chromosome 4 of the plant Arabidopsis thaliana.</title>
        <authorList>
            <person name="Mayer K.F.X."/>
            <person name="Schueller C."/>
            <person name="Wambutt R."/>
            <person name="Murphy G."/>
            <person name="Volckaert G."/>
            <person name="Pohl T."/>
            <person name="Duesterhoeft A."/>
            <person name="Stiekema W."/>
            <person name="Entian K.-D."/>
            <person name="Terryn N."/>
            <person name="Harris B."/>
            <person name="Ansorge W."/>
            <person name="Brandt P."/>
            <person name="Grivell L.A."/>
            <person name="Rieger M."/>
            <person name="Weichselgartner M."/>
            <person name="de Simone V."/>
            <person name="Obermaier B."/>
            <person name="Mache R."/>
            <person name="Mueller M."/>
            <person name="Kreis M."/>
            <person name="Delseny M."/>
            <person name="Puigdomenech P."/>
            <person name="Watson M."/>
            <person name="Schmidtheini T."/>
            <person name="Reichert B."/>
            <person name="Portetelle D."/>
            <person name="Perez-Alonso M."/>
            <person name="Boutry M."/>
            <person name="Bancroft I."/>
            <person name="Vos P."/>
            <person name="Hoheisel J."/>
            <person name="Zimmermann W."/>
            <person name="Wedler H."/>
            <person name="Ridley P."/>
            <person name="Langham S.-A."/>
            <person name="McCullagh B."/>
            <person name="Bilham L."/>
            <person name="Robben J."/>
            <person name="van der Schueren J."/>
            <person name="Grymonprez B."/>
            <person name="Chuang Y.-J."/>
            <person name="Vandenbussche F."/>
            <person name="Braeken M."/>
            <person name="Weltjens I."/>
            <person name="Voet M."/>
            <person name="Bastiaens I."/>
            <person name="Aert R."/>
            <person name="Defoor E."/>
            <person name="Weitzenegger T."/>
            <person name="Bothe G."/>
            <person name="Ramsperger U."/>
            <person name="Hilbert H."/>
            <person name="Braun M."/>
            <person name="Holzer E."/>
            <person name="Brandt A."/>
            <person name="Peters S."/>
            <person name="van Staveren M."/>
            <person name="Dirkse W."/>
            <person name="Mooijman P."/>
            <person name="Klein Lankhorst R."/>
            <person name="Rose M."/>
            <person name="Hauf J."/>
            <person name="Koetter P."/>
            <person name="Berneiser S."/>
            <person name="Hempel S."/>
            <person name="Feldpausch M."/>
            <person name="Lamberth S."/>
            <person name="Van den Daele H."/>
            <person name="De Keyser A."/>
            <person name="Buysshaert C."/>
            <person name="Gielen J."/>
            <person name="Villarroel R."/>
            <person name="De Clercq R."/>
            <person name="van Montagu M."/>
            <person name="Rogers J."/>
            <person name="Cronin A."/>
            <person name="Quail M.A."/>
            <person name="Bray-Allen S."/>
            <person name="Clark L."/>
            <person name="Doggett J."/>
            <person name="Hall S."/>
            <person name="Kay M."/>
            <person name="Lennard N."/>
            <person name="McLay K."/>
            <person name="Mayes R."/>
            <person name="Pettett A."/>
            <person name="Rajandream M.A."/>
            <person name="Lyne M."/>
            <person name="Benes V."/>
            <person name="Rechmann S."/>
            <person name="Borkova D."/>
            <person name="Bloecker H."/>
            <person name="Scharfe M."/>
            <person name="Grimm M."/>
            <person name="Loehnert T.-H."/>
            <person name="Dose S."/>
            <person name="de Haan M."/>
            <person name="Maarse A.C."/>
            <person name="Schaefer M."/>
            <person name="Mueller-Auer S."/>
            <person name="Gabel C."/>
            <person name="Fuchs M."/>
            <person name="Fartmann B."/>
            <person name="Granderath K."/>
            <person name="Dauner D."/>
            <person name="Herzl A."/>
            <person name="Neumann S."/>
            <person name="Argiriou A."/>
            <person name="Vitale D."/>
            <person name="Liguori R."/>
            <person name="Piravandi E."/>
            <person name="Massenet O."/>
            <person name="Quigley F."/>
            <person name="Clabauld G."/>
            <person name="Muendlein A."/>
            <person name="Felber R."/>
            <person name="Schnabl S."/>
            <person name="Hiller R."/>
            <person name="Schmidt W."/>
            <person name="Lecharny A."/>
            <person name="Aubourg S."/>
            <person name="Chefdor F."/>
            <person name="Cooke R."/>
            <person name="Berger C."/>
            <person name="Monfort A."/>
            <person name="Casacuberta E."/>
            <person name="Gibbons T."/>
            <person name="Weber N."/>
            <person name="Vandenbol M."/>
            <person name="Bargues M."/>
            <person name="Terol J."/>
            <person name="Torres A."/>
            <person name="Perez-Perez A."/>
            <person name="Purnelle B."/>
            <person name="Bent E."/>
            <person name="Johnson S."/>
            <person name="Tacon D."/>
            <person name="Jesse T."/>
            <person name="Heijnen L."/>
            <person name="Schwarz S."/>
            <person name="Scholler P."/>
            <person name="Heber S."/>
            <person name="Francs P."/>
            <person name="Bielke C."/>
            <person name="Frishman D."/>
            <person name="Haase D."/>
            <person name="Lemcke K."/>
            <person name="Mewes H.-W."/>
            <person name="Stocker S."/>
            <person name="Zaccaria P."/>
            <person name="Bevan M."/>
            <person name="Wilson R.K."/>
            <person name="de la Bastide M."/>
            <person name="Habermann K."/>
            <person name="Parnell L."/>
            <person name="Dedhia N."/>
            <person name="Gnoj L."/>
            <person name="Schutz K."/>
            <person name="Huang E."/>
            <person name="Spiegel L."/>
            <person name="Sekhon M."/>
            <person name="Murray J."/>
            <person name="Sheet P."/>
            <person name="Cordes M."/>
            <person name="Abu-Threideh J."/>
            <person name="Stoneking T."/>
            <person name="Kalicki J."/>
            <person name="Graves T."/>
            <person name="Harmon G."/>
            <person name="Edwards J."/>
            <person name="Latreille P."/>
            <person name="Courtney L."/>
            <person name="Cloud J."/>
            <person name="Abbott A."/>
            <person name="Scott K."/>
            <person name="Johnson D."/>
            <person name="Minx P."/>
            <person name="Bentley D."/>
            <person name="Fulton B."/>
            <person name="Miller N."/>
            <person name="Greco T."/>
            <person name="Kemp K."/>
            <person name="Kramer J."/>
            <person name="Fulton L."/>
            <person name="Mardis E."/>
            <person name="Dante M."/>
            <person name="Pepin K."/>
            <person name="Hillier L.W."/>
            <person name="Nelson J."/>
            <person name="Spieth J."/>
            <person name="Ryan E."/>
            <person name="Andrews S."/>
            <person name="Geisel C."/>
            <person name="Layman D."/>
            <person name="Du H."/>
            <person name="Ali J."/>
            <person name="Berghoff A."/>
            <person name="Jones K."/>
            <person name="Drone K."/>
            <person name="Cotton M."/>
            <person name="Joshu C."/>
            <person name="Antonoiu B."/>
            <person name="Zidanic M."/>
            <person name="Strong C."/>
            <person name="Sun H."/>
            <person name="Lamar B."/>
            <person name="Yordan C."/>
            <person name="Ma P."/>
            <person name="Zhong J."/>
            <person name="Preston R."/>
            <person name="Vil D."/>
            <person name="Shekher M."/>
            <person name="Matero A."/>
            <person name="Shah R."/>
            <person name="Swaby I.K."/>
            <person name="O'Shaughnessy A."/>
            <person name="Rodriguez M."/>
            <person name="Hoffman J."/>
            <person name="Till S."/>
            <person name="Granat S."/>
            <person name="Shohdy N."/>
            <person name="Hasegawa A."/>
            <person name="Hameed A."/>
            <person name="Lodhi M."/>
            <person name="Johnson A."/>
            <person name="Chen E."/>
            <person name="Marra M.A."/>
            <person name="Martienssen R."/>
            <person name="McCombie W.R."/>
        </authorList>
    </citation>
    <scope>NUCLEOTIDE SEQUENCE [LARGE SCALE GENOMIC DNA]</scope>
    <source>
        <strain>cv. Columbia</strain>
    </source>
</reference>
<reference key="2">
    <citation type="journal article" date="2017" name="Plant J.">
        <title>Araport11: a complete reannotation of the Arabidopsis thaliana reference genome.</title>
        <authorList>
            <person name="Cheng C.Y."/>
            <person name="Krishnakumar V."/>
            <person name="Chan A.P."/>
            <person name="Thibaud-Nissen F."/>
            <person name="Schobel S."/>
            <person name="Town C.D."/>
        </authorList>
    </citation>
    <scope>GENOME REANNOTATION</scope>
    <source>
        <strain>cv. Columbia</strain>
    </source>
</reference>
<reference key="3">
    <citation type="submission" date="2004-06" db="EMBL/GenBank/DDBJ databases">
        <title>Arabidopsis ORF clones.</title>
        <authorList>
            <person name="Cheuk R.F."/>
            <person name="Chen H."/>
            <person name="Kim C.J."/>
            <person name="Shinn P."/>
            <person name="Ecker J.R."/>
        </authorList>
    </citation>
    <scope>NUCLEOTIDE SEQUENCE [LARGE SCALE MRNA]</scope>
    <source>
        <strain>cv. Columbia</strain>
    </source>
</reference>
<reference key="4">
    <citation type="journal article" date="2001" name="Plant Mol. Biol.">
        <title>Two large Arabidopsis thaliana gene families are homologous to the Brassica gene superfamily that encodes pollen coat proteins and the male component of the self-incompatibility response.</title>
        <authorList>
            <person name="Vanoosthuyse V."/>
            <person name="Miege C."/>
            <person name="Dumas C."/>
            <person name="Cock J.M."/>
        </authorList>
    </citation>
    <scope>IDENTIFICATION</scope>
</reference>
<reference key="5">
    <citation type="journal article" date="2005" name="Plant Physiol.">
        <title>Genome organization of more than 300 defensin-like genes in Arabidopsis.</title>
        <authorList>
            <person name="Silverstein K.A.T."/>
            <person name="Graham M.A."/>
            <person name="Paape T.D."/>
            <person name="VandenBosch K.A."/>
        </authorList>
    </citation>
    <scope>GENE FAMILY</scope>
</reference>
<accession>Q9T0E3</accession>
<accession>Q6GKX9</accession>
<proteinExistence type="inferred from homology"/>
<name>DF151_ARATH</name>
<comment type="subcellular location">
    <subcellularLocation>
        <location evidence="1">Secreted</location>
    </subcellularLocation>
</comment>
<comment type="similarity">
    <text evidence="3">Belongs to the DEFL family.</text>
</comment>
<keyword id="KW-0929">Antimicrobial</keyword>
<keyword id="KW-1015">Disulfide bond</keyword>
<keyword id="KW-0295">Fungicide</keyword>
<keyword id="KW-0611">Plant defense</keyword>
<keyword id="KW-1185">Reference proteome</keyword>
<keyword id="KW-0964">Secreted</keyword>
<keyword id="KW-0732">Signal</keyword>